<comment type="function">
    <text evidence="1">DNA-dependent RNA polymerase catalyzes the transcription of DNA into RNA using the four ribonucleoside triphosphates as substrates.</text>
</comment>
<comment type="catalytic activity">
    <reaction evidence="1">
        <text>RNA(n) + a ribonucleoside 5'-triphosphate = RNA(n+1) + diphosphate</text>
        <dbReference type="Rhea" id="RHEA:21248"/>
        <dbReference type="Rhea" id="RHEA-COMP:14527"/>
        <dbReference type="Rhea" id="RHEA-COMP:17342"/>
        <dbReference type="ChEBI" id="CHEBI:33019"/>
        <dbReference type="ChEBI" id="CHEBI:61557"/>
        <dbReference type="ChEBI" id="CHEBI:140395"/>
        <dbReference type="EC" id="2.7.7.6"/>
    </reaction>
</comment>
<comment type="subunit">
    <text evidence="1">In cyanobacteria the RNAP catalytic core is composed of 2 alpha, 1 beta, 1 beta', 1 gamma and 1 omega subunit. When a sigma factor is associated with the core the holoenzyme is formed, which can initiate transcription.</text>
</comment>
<comment type="domain">
    <text evidence="1">The N-terminal domain is essential for RNAP assembly and basal transcription, whereas the C-terminal domain is involved in interaction with transcriptional regulators and with upstream promoter elements.</text>
</comment>
<comment type="similarity">
    <text evidence="1">Belongs to the RNA polymerase alpha chain family.</text>
</comment>
<keyword id="KW-0240">DNA-directed RNA polymerase</keyword>
<keyword id="KW-0548">Nucleotidyltransferase</keyword>
<keyword id="KW-0804">Transcription</keyword>
<keyword id="KW-0808">Transferase</keyword>
<proteinExistence type="inferred from homology"/>
<sequence>MLQYQIDRIDHQVSNDRSQTGVFLIGPLERGQATTLGNSLRRVLMGGLEGSAVTAVRIAGVNHEYATIPGVREDVLDILLNCKQISVDSRSQELEIGRLVVTGPADVKAKDIQFSSQVEVVDGDRPIATVQEGHNLELEIHVERGVGYRPVDRKNEETSAIDLLQIDAVFMPINRVNFTIDETAVAEGGSTRERLKMELVTDGSTSPDDALAEAANQLIELFQPLATVSMVEEIPEEPEPAAEAQIPLEELNLSVRAYNCLKRAQVNSVSDLMGFSYEDLLEIKNFGSKSADEVIEALERIGISIPQSRTSA</sequence>
<protein>
    <recommendedName>
        <fullName evidence="1">DNA-directed RNA polymerase subunit alpha</fullName>
        <shortName evidence="1">RNAP subunit alpha</shortName>
        <ecNumber evidence="1">2.7.7.6</ecNumber>
    </recommendedName>
    <alternativeName>
        <fullName evidence="1">RNA polymerase subunit alpha</fullName>
    </alternativeName>
    <alternativeName>
        <fullName evidence="1">Transcriptase subunit alpha</fullName>
    </alternativeName>
</protein>
<evidence type="ECO:0000255" key="1">
    <source>
        <dbReference type="HAMAP-Rule" id="MF_00059"/>
    </source>
</evidence>
<feature type="chain" id="PRO_0000296854" description="DNA-directed RNA polymerase subunit alpha">
    <location>
        <begin position="1"/>
        <end position="312"/>
    </location>
</feature>
<feature type="region of interest" description="Alpha N-terminal domain (alpha-NTD)" evidence="1">
    <location>
        <begin position="1"/>
        <end position="229"/>
    </location>
</feature>
<feature type="region of interest" description="Alpha C-terminal domain (alpha-CTD)" evidence="1">
    <location>
        <begin position="239"/>
        <end position="312"/>
    </location>
</feature>
<name>RPOA_PROM1</name>
<gene>
    <name evidence="1" type="primary">rpoA</name>
    <name type="ordered locus">NATL1_19811</name>
</gene>
<dbReference type="EC" id="2.7.7.6" evidence="1"/>
<dbReference type="EMBL" id="CP000553">
    <property type="protein sequence ID" value="ABM76537.1"/>
    <property type="molecule type" value="Genomic_DNA"/>
</dbReference>
<dbReference type="RefSeq" id="WP_011295450.1">
    <property type="nucleotide sequence ID" value="NC_008819.1"/>
</dbReference>
<dbReference type="SMR" id="A2C4X7"/>
<dbReference type="KEGG" id="pme:NATL1_19811"/>
<dbReference type="eggNOG" id="COG0202">
    <property type="taxonomic scope" value="Bacteria"/>
</dbReference>
<dbReference type="HOGENOM" id="CLU_053084_0_1_3"/>
<dbReference type="Proteomes" id="UP000002592">
    <property type="component" value="Chromosome"/>
</dbReference>
<dbReference type="GO" id="GO:0005737">
    <property type="term" value="C:cytoplasm"/>
    <property type="evidence" value="ECO:0007669"/>
    <property type="project" value="UniProtKB-ARBA"/>
</dbReference>
<dbReference type="GO" id="GO:0000428">
    <property type="term" value="C:DNA-directed RNA polymerase complex"/>
    <property type="evidence" value="ECO:0007669"/>
    <property type="project" value="UniProtKB-KW"/>
</dbReference>
<dbReference type="GO" id="GO:0003677">
    <property type="term" value="F:DNA binding"/>
    <property type="evidence" value="ECO:0007669"/>
    <property type="project" value="UniProtKB-UniRule"/>
</dbReference>
<dbReference type="GO" id="GO:0003899">
    <property type="term" value="F:DNA-directed RNA polymerase activity"/>
    <property type="evidence" value="ECO:0007669"/>
    <property type="project" value="UniProtKB-UniRule"/>
</dbReference>
<dbReference type="GO" id="GO:0046983">
    <property type="term" value="F:protein dimerization activity"/>
    <property type="evidence" value="ECO:0007669"/>
    <property type="project" value="InterPro"/>
</dbReference>
<dbReference type="GO" id="GO:0006351">
    <property type="term" value="P:DNA-templated transcription"/>
    <property type="evidence" value="ECO:0007669"/>
    <property type="project" value="UniProtKB-UniRule"/>
</dbReference>
<dbReference type="CDD" id="cd06928">
    <property type="entry name" value="RNAP_alpha_NTD"/>
    <property type="match status" value="1"/>
</dbReference>
<dbReference type="FunFam" id="2.170.120.12:FF:000001">
    <property type="entry name" value="DNA-directed RNA polymerase subunit alpha"/>
    <property type="match status" value="1"/>
</dbReference>
<dbReference type="Gene3D" id="1.10.150.20">
    <property type="entry name" value="5' to 3' exonuclease, C-terminal subdomain"/>
    <property type="match status" value="1"/>
</dbReference>
<dbReference type="Gene3D" id="2.170.120.12">
    <property type="entry name" value="DNA-directed RNA polymerase, insert domain"/>
    <property type="match status" value="1"/>
</dbReference>
<dbReference type="Gene3D" id="3.30.1360.10">
    <property type="entry name" value="RNA polymerase, RBP11-like subunit"/>
    <property type="match status" value="1"/>
</dbReference>
<dbReference type="HAMAP" id="MF_00059">
    <property type="entry name" value="RNApol_bact_RpoA"/>
    <property type="match status" value="1"/>
</dbReference>
<dbReference type="InterPro" id="IPR011262">
    <property type="entry name" value="DNA-dir_RNA_pol_insert"/>
</dbReference>
<dbReference type="InterPro" id="IPR011263">
    <property type="entry name" value="DNA-dir_RNA_pol_RpoA/D/Rpb3"/>
</dbReference>
<dbReference type="InterPro" id="IPR011773">
    <property type="entry name" value="DNA-dir_RpoA"/>
</dbReference>
<dbReference type="InterPro" id="IPR036603">
    <property type="entry name" value="RBP11-like"/>
</dbReference>
<dbReference type="InterPro" id="IPR011260">
    <property type="entry name" value="RNAP_asu_C"/>
</dbReference>
<dbReference type="InterPro" id="IPR036643">
    <property type="entry name" value="RNApol_insert_sf"/>
</dbReference>
<dbReference type="NCBIfam" id="NF003516">
    <property type="entry name" value="PRK05182.2-2"/>
    <property type="match status" value="1"/>
</dbReference>
<dbReference type="NCBIfam" id="NF003519">
    <property type="entry name" value="PRK05182.2-5"/>
    <property type="match status" value="1"/>
</dbReference>
<dbReference type="NCBIfam" id="TIGR02027">
    <property type="entry name" value="rpoA"/>
    <property type="match status" value="1"/>
</dbReference>
<dbReference type="Pfam" id="PF01000">
    <property type="entry name" value="RNA_pol_A_bac"/>
    <property type="match status" value="1"/>
</dbReference>
<dbReference type="Pfam" id="PF03118">
    <property type="entry name" value="RNA_pol_A_CTD"/>
    <property type="match status" value="1"/>
</dbReference>
<dbReference type="Pfam" id="PF01193">
    <property type="entry name" value="RNA_pol_L"/>
    <property type="match status" value="1"/>
</dbReference>
<dbReference type="SMART" id="SM00662">
    <property type="entry name" value="RPOLD"/>
    <property type="match status" value="1"/>
</dbReference>
<dbReference type="SUPFAM" id="SSF47789">
    <property type="entry name" value="C-terminal domain of RNA polymerase alpha subunit"/>
    <property type="match status" value="1"/>
</dbReference>
<dbReference type="SUPFAM" id="SSF56553">
    <property type="entry name" value="Insert subdomain of RNA polymerase alpha subunit"/>
    <property type="match status" value="1"/>
</dbReference>
<dbReference type="SUPFAM" id="SSF55257">
    <property type="entry name" value="RBP11-like subunits of RNA polymerase"/>
    <property type="match status" value="1"/>
</dbReference>
<organism>
    <name type="scientific">Prochlorococcus marinus (strain NATL1A)</name>
    <dbReference type="NCBI Taxonomy" id="167555"/>
    <lineage>
        <taxon>Bacteria</taxon>
        <taxon>Bacillati</taxon>
        <taxon>Cyanobacteriota</taxon>
        <taxon>Cyanophyceae</taxon>
        <taxon>Synechococcales</taxon>
        <taxon>Prochlorococcaceae</taxon>
        <taxon>Prochlorococcus</taxon>
    </lineage>
</organism>
<accession>A2C4X7</accession>
<reference key="1">
    <citation type="journal article" date="2007" name="PLoS Genet.">
        <title>Patterns and implications of gene gain and loss in the evolution of Prochlorococcus.</title>
        <authorList>
            <person name="Kettler G.C."/>
            <person name="Martiny A.C."/>
            <person name="Huang K."/>
            <person name="Zucker J."/>
            <person name="Coleman M.L."/>
            <person name="Rodrigue S."/>
            <person name="Chen F."/>
            <person name="Lapidus A."/>
            <person name="Ferriera S."/>
            <person name="Johnson J."/>
            <person name="Steglich C."/>
            <person name="Church G.M."/>
            <person name="Richardson P."/>
            <person name="Chisholm S.W."/>
        </authorList>
    </citation>
    <scope>NUCLEOTIDE SEQUENCE [LARGE SCALE GENOMIC DNA]</scope>
    <source>
        <strain>NATL1A</strain>
    </source>
</reference>